<protein>
    <recommendedName>
        <fullName evidence="2">Large ribosomal subunit protein bL28</fullName>
    </recommendedName>
    <alternativeName>
        <fullName>50S ribosomal protein L28</fullName>
    </alternativeName>
</protein>
<proteinExistence type="evidence at protein level"/>
<keyword id="KW-0903">Direct protein sequencing</keyword>
<keyword id="KW-0687">Ribonucleoprotein</keyword>
<keyword id="KW-0689">Ribosomal protein</keyword>
<accession>P23374</accession>
<evidence type="ECO:0000269" key="1">
    <source>
    </source>
</evidence>
<evidence type="ECO:0000305" key="2"/>
<gene>
    <name type="primary">rpmB</name>
</gene>
<reference key="1">
    <citation type="journal article" date="1991" name="Biochimie">
        <title>Characterization and primary structure of proteins L28, L33 and L34 from Bacillus stearothermophilus ribosomes.</title>
        <authorList>
            <person name="Kruft V."/>
            <person name="Kapp U."/>
            <person name="Wittmann-Liebold B."/>
        </authorList>
    </citation>
    <scope>PROTEIN SEQUENCE OF 2-61</scope>
</reference>
<organism>
    <name type="scientific">Geobacillus stearothermophilus</name>
    <name type="common">Bacillus stearothermophilus</name>
    <dbReference type="NCBI Taxonomy" id="1422"/>
    <lineage>
        <taxon>Bacteria</taxon>
        <taxon>Bacillati</taxon>
        <taxon>Bacillota</taxon>
        <taxon>Bacilli</taxon>
        <taxon>Bacillales</taxon>
        <taxon>Anoxybacillaceae</taxon>
        <taxon>Geobacillus</taxon>
    </lineage>
</organism>
<comment type="similarity">
    <text evidence="2">Belongs to the bacterial ribosomal protein bL28 family.</text>
</comment>
<dbReference type="PIR" id="A48396">
    <property type="entry name" value="A48396"/>
</dbReference>
<dbReference type="SMR" id="P23374"/>
<dbReference type="GO" id="GO:1990904">
    <property type="term" value="C:ribonucleoprotein complex"/>
    <property type="evidence" value="ECO:0007669"/>
    <property type="project" value="UniProtKB-KW"/>
</dbReference>
<dbReference type="GO" id="GO:0005840">
    <property type="term" value="C:ribosome"/>
    <property type="evidence" value="ECO:0007669"/>
    <property type="project" value="UniProtKB-KW"/>
</dbReference>
<dbReference type="GO" id="GO:0003735">
    <property type="term" value="F:structural constituent of ribosome"/>
    <property type="evidence" value="ECO:0007669"/>
    <property type="project" value="InterPro"/>
</dbReference>
<dbReference type="GO" id="GO:0006412">
    <property type="term" value="P:translation"/>
    <property type="evidence" value="ECO:0007669"/>
    <property type="project" value="UniProtKB-UniRule"/>
</dbReference>
<dbReference type="Gene3D" id="2.30.170.40">
    <property type="entry name" value="Ribosomal protein L28/L24"/>
    <property type="match status" value="1"/>
</dbReference>
<dbReference type="HAMAP" id="MF_00373">
    <property type="entry name" value="Ribosomal_bL28"/>
    <property type="match status" value="1"/>
</dbReference>
<dbReference type="InterPro" id="IPR050096">
    <property type="entry name" value="Bacterial_rp_bL28"/>
</dbReference>
<dbReference type="InterPro" id="IPR026569">
    <property type="entry name" value="Ribosomal_bL28"/>
</dbReference>
<dbReference type="InterPro" id="IPR034704">
    <property type="entry name" value="Ribosomal_bL28/bL31-like_sf"/>
</dbReference>
<dbReference type="InterPro" id="IPR001383">
    <property type="entry name" value="Ribosomal_bL28_bact-type"/>
</dbReference>
<dbReference type="InterPro" id="IPR037147">
    <property type="entry name" value="Ribosomal_bL28_sf"/>
</dbReference>
<dbReference type="NCBIfam" id="TIGR00009">
    <property type="entry name" value="L28"/>
    <property type="match status" value="1"/>
</dbReference>
<dbReference type="PANTHER" id="PTHR39080">
    <property type="entry name" value="50S RIBOSOMAL PROTEIN L28"/>
    <property type="match status" value="1"/>
</dbReference>
<dbReference type="PANTHER" id="PTHR39080:SF1">
    <property type="entry name" value="LARGE RIBOSOMAL SUBUNIT PROTEIN BL28A"/>
    <property type="match status" value="1"/>
</dbReference>
<dbReference type="Pfam" id="PF00830">
    <property type="entry name" value="Ribosomal_L28"/>
    <property type="match status" value="1"/>
</dbReference>
<dbReference type="SUPFAM" id="SSF143800">
    <property type="entry name" value="L28p-like"/>
    <property type="match status" value="1"/>
</dbReference>
<name>RL28_GEOSE</name>
<feature type="initiator methionine" description="Removed" evidence="1">
    <location>
        <position position="1"/>
    </location>
</feature>
<feature type="chain" id="PRO_0000178430" description="Large ribosomal subunit protein bL28">
    <location>
        <begin position="2"/>
        <end position="61"/>
    </location>
</feature>
<sequence>MAKCFITGKKKSFGNTRSHAMNASRRDWKANLQKVRILVDGKPKRVWVSARALKSGKVKRV</sequence>